<protein>
    <recommendedName>
        <fullName evidence="2">Alkyl hydroperoxide reductase AhpD</fullName>
        <ecNumber evidence="2">1.11.1.28</ecNumber>
    </recommendedName>
    <alternativeName>
        <fullName evidence="2">Alkylhydroperoxidase AhpD</fullName>
    </alternativeName>
</protein>
<name>AHPD_STRCO</name>
<comment type="function">
    <text evidence="2">Antioxidant protein with alkyl hydroperoxidase activity. Required for the reduction of the AhpC active site cysteine residues and for the regeneration of the AhpC enzyme activity.</text>
</comment>
<comment type="catalytic activity">
    <reaction evidence="2">
        <text>N(6)-[(R)-dihydrolipoyl]-L-lysyl-[lipoyl-carrier protein] + a hydroperoxide = N(6)-[(R)-lipoyl]-L-lysyl-[lipoyl-carrier protein] + an alcohol + H2O</text>
        <dbReference type="Rhea" id="RHEA:62636"/>
        <dbReference type="Rhea" id="RHEA-COMP:10502"/>
        <dbReference type="Rhea" id="RHEA-COMP:16355"/>
        <dbReference type="ChEBI" id="CHEBI:15377"/>
        <dbReference type="ChEBI" id="CHEBI:30879"/>
        <dbReference type="ChEBI" id="CHEBI:35924"/>
        <dbReference type="ChEBI" id="CHEBI:83099"/>
        <dbReference type="ChEBI" id="CHEBI:83100"/>
        <dbReference type="EC" id="1.11.1.28"/>
    </reaction>
</comment>
<comment type="subunit">
    <text evidence="2">Homotrimer.</text>
</comment>
<comment type="similarity">
    <text evidence="2">Belongs to the AhpD family.</text>
</comment>
<gene>
    <name evidence="2" type="primary">ahpD</name>
    <name type="ordered locus">SCO5031</name>
    <name type="ORF">SCK7.04c</name>
</gene>
<feature type="chain" id="PRO_0000359509" description="Alkyl hydroperoxide reductase AhpD">
    <location>
        <begin position="1"/>
        <end position="178"/>
    </location>
</feature>
<feature type="active site" description="Proton donor" evidence="2">
    <location>
        <position position="131"/>
    </location>
</feature>
<feature type="active site" description="Cysteine sulfenic acid (-SOH) intermediate" evidence="2">
    <location>
        <position position="134"/>
    </location>
</feature>
<feature type="disulfide bond" evidence="1">
    <location>
        <begin position="131"/>
        <end position="134"/>
    </location>
</feature>
<feature type="disulfide bond" description="Interchain (with AhpC); in linked form" evidence="2">
    <location>
        <position position="134"/>
    </location>
</feature>
<reference key="1">
    <citation type="journal article" date="2002" name="Nature">
        <title>Complete genome sequence of the model actinomycete Streptomyces coelicolor A3(2).</title>
        <authorList>
            <person name="Bentley S.D."/>
            <person name="Chater K.F."/>
            <person name="Cerdeno-Tarraga A.-M."/>
            <person name="Challis G.L."/>
            <person name="Thomson N.R."/>
            <person name="James K.D."/>
            <person name="Harris D.E."/>
            <person name="Quail M.A."/>
            <person name="Kieser H."/>
            <person name="Harper D."/>
            <person name="Bateman A."/>
            <person name="Brown S."/>
            <person name="Chandra G."/>
            <person name="Chen C.W."/>
            <person name="Collins M."/>
            <person name="Cronin A."/>
            <person name="Fraser A."/>
            <person name="Goble A."/>
            <person name="Hidalgo J."/>
            <person name="Hornsby T."/>
            <person name="Howarth S."/>
            <person name="Huang C.-H."/>
            <person name="Kieser T."/>
            <person name="Larke L."/>
            <person name="Murphy L.D."/>
            <person name="Oliver K."/>
            <person name="O'Neil S."/>
            <person name="Rabbinowitsch E."/>
            <person name="Rajandream M.A."/>
            <person name="Rutherford K.M."/>
            <person name="Rutter S."/>
            <person name="Seeger K."/>
            <person name="Saunders D."/>
            <person name="Sharp S."/>
            <person name="Squares R."/>
            <person name="Squares S."/>
            <person name="Taylor K."/>
            <person name="Warren T."/>
            <person name="Wietzorrek A."/>
            <person name="Woodward J.R."/>
            <person name="Barrell B.G."/>
            <person name="Parkhill J."/>
            <person name="Hopwood D.A."/>
        </authorList>
    </citation>
    <scope>NUCLEOTIDE SEQUENCE [LARGE SCALE GENOMIC DNA]</scope>
    <source>
        <strain>ATCC BAA-471 / A3(2) / M145</strain>
    </source>
</reference>
<proteinExistence type="inferred from homology"/>
<dbReference type="EC" id="1.11.1.28" evidence="2"/>
<dbReference type="EMBL" id="AL939122">
    <property type="protein sequence ID" value="CAC05876.1"/>
    <property type="molecule type" value="Genomic_DNA"/>
</dbReference>
<dbReference type="RefSeq" id="NP_629183.1">
    <property type="nucleotide sequence ID" value="NC_003888.3"/>
</dbReference>
<dbReference type="RefSeq" id="WP_003973946.1">
    <property type="nucleotide sequence ID" value="NZ_VNID01000008.1"/>
</dbReference>
<dbReference type="SMR" id="Q7AKI6"/>
<dbReference type="STRING" id="100226.gene:17762680"/>
<dbReference type="PeroxiBase" id="4586">
    <property type="entry name" value="ScoAhpD"/>
</dbReference>
<dbReference type="PaxDb" id="100226-SCO5031"/>
<dbReference type="KEGG" id="sco:SCO5031"/>
<dbReference type="eggNOG" id="COG2128">
    <property type="taxonomic scope" value="Bacteria"/>
</dbReference>
<dbReference type="HOGENOM" id="CLU_105328_0_0_11"/>
<dbReference type="InParanoid" id="Q7AKI6"/>
<dbReference type="OrthoDB" id="9801997at2"/>
<dbReference type="PhylomeDB" id="Q7AKI6"/>
<dbReference type="Proteomes" id="UP000001973">
    <property type="component" value="Chromosome"/>
</dbReference>
<dbReference type="GO" id="GO:0008785">
    <property type="term" value="F:alkyl hydroperoxide reductase activity"/>
    <property type="evidence" value="ECO:0007669"/>
    <property type="project" value="UniProtKB-UniRule"/>
</dbReference>
<dbReference type="GO" id="GO:0015036">
    <property type="term" value="F:disulfide oxidoreductase activity"/>
    <property type="evidence" value="ECO:0000318"/>
    <property type="project" value="GO_Central"/>
</dbReference>
<dbReference type="GO" id="GO:0032843">
    <property type="term" value="F:hydroperoxide reductase activity"/>
    <property type="evidence" value="ECO:0000318"/>
    <property type="project" value="GO_Central"/>
</dbReference>
<dbReference type="GO" id="GO:0051920">
    <property type="term" value="F:peroxiredoxin activity"/>
    <property type="evidence" value="ECO:0007669"/>
    <property type="project" value="InterPro"/>
</dbReference>
<dbReference type="GO" id="GO:0045454">
    <property type="term" value="P:cell redox homeostasis"/>
    <property type="evidence" value="ECO:0000318"/>
    <property type="project" value="GO_Central"/>
</dbReference>
<dbReference type="GO" id="GO:0006979">
    <property type="term" value="P:response to oxidative stress"/>
    <property type="evidence" value="ECO:0007669"/>
    <property type="project" value="InterPro"/>
</dbReference>
<dbReference type="Gene3D" id="1.20.1290.10">
    <property type="entry name" value="AhpD-like"/>
    <property type="match status" value="1"/>
</dbReference>
<dbReference type="HAMAP" id="MF_01676">
    <property type="entry name" value="AhpD"/>
    <property type="match status" value="1"/>
</dbReference>
<dbReference type="InterPro" id="IPR004674">
    <property type="entry name" value="AhpD"/>
</dbReference>
<dbReference type="InterPro" id="IPR029032">
    <property type="entry name" value="AhpD-like"/>
</dbReference>
<dbReference type="InterPro" id="IPR004675">
    <property type="entry name" value="AhpD_core"/>
</dbReference>
<dbReference type="InterPro" id="IPR003779">
    <property type="entry name" value="CMD-like"/>
</dbReference>
<dbReference type="NCBIfam" id="TIGR00777">
    <property type="entry name" value="ahpD"/>
    <property type="match status" value="1"/>
</dbReference>
<dbReference type="NCBIfam" id="TIGR00778">
    <property type="entry name" value="ahpD_dom"/>
    <property type="match status" value="1"/>
</dbReference>
<dbReference type="PANTHER" id="PTHR33930">
    <property type="entry name" value="ALKYL HYDROPEROXIDE REDUCTASE AHPD"/>
    <property type="match status" value="1"/>
</dbReference>
<dbReference type="PANTHER" id="PTHR33930:SF7">
    <property type="entry name" value="ALKYL HYDROPEROXIDE REDUCTASE AHPD"/>
    <property type="match status" value="1"/>
</dbReference>
<dbReference type="Pfam" id="PF02627">
    <property type="entry name" value="CMD"/>
    <property type="match status" value="1"/>
</dbReference>
<dbReference type="SUPFAM" id="SSF69118">
    <property type="entry name" value="AhpD-like"/>
    <property type="match status" value="1"/>
</dbReference>
<organism>
    <name type="scientific">Streptomyces coelicolor (strain ATCC BAA-471 / A3(2) / M145)</name>
    <dbReference type="NCBI Taxonomy" id="100226"/>
    <lineage>
        <taxon>Bacteria</taxon>
        <taxon>Bacillati</taxon>
        <taxon>Actinomycetota</taxon>
        <taxon>Actinomycetes</taxon>
        <taxon>Kitasatosporales</taxon>
        <taxon>Streptomycetaceae</taxon>
        <taxon>Streptomyces</taxon>
        <taxon>Streptomyces albidoflavus group</taxon>
    </lineage>
</organism>
<evidence type="ECO:0000250" key="1"/>
<evidence type="ECO:0000255" key="2">
    <source>
        <dbReference type="HAMAP-Rule" id="MF_01676"/>
    </source>
</evidence>
<sequence length="178" mass="19002">MSLDSLKSAVPDYAKDLKLNLGSVIGNSDLPAQQLWGTVLATAIASRSPIVLRELEPEAKANLSPEAYSAAKSAAAVMAMNNVFYRTRHLLSDHEYGTLRAGLRMNVIGNPGVDKVDFELWSFAVSAINGCGMCLDSHEQVLRKAGVDRETIQEAFKIAAVVEAVGVTLDAEAVLAAE</sequence>
<keyword id="KW-0049">Antioxidant</keyword>
<keyword id="KW-1015">Disulfide bond</keyword>
<keyword id="KW-0560">Oxidoreductase</keyword>
<keyword id="KW-0575">Peroxidase</keyword>
<keyword id="KW-0676">Redox-active center</keyword>
<keyword id="KW-1185">Reference proteome</keyword>
<accession>Q7AKI6</accession>